<proteinExistence type="inferred from homology"/>
<reference key="1">
    <citation type="journal article" date="1989" name="Mol. Gen. Genet.">
        <title>The complete sequence of the rice (Oryza sativa) chloroplast genome: intermolecular recombination between distinct tRNA genes accounts for a major plastid DNA inversion during the evolution of the cereals.</title>
        <authorList>
            <person name="Hiratsuka J."/>
            <person name="Shimada H."/>
            <person name="Whittier R."/>
            <person name="Ishibashi T."/>
            <person name="Sakamoto M."/>
            <person name="Mori M."/>
            <person name="Kondo C."/>
            <person name="Honji Y."/>
            <person name="Sun C.-R."/>
            <person name="Meng B.-Y."/>
            <person name="Li Y.-Q."/>
            <person name="Kanno A."/>
            <person name="Nishizawa Y."/>
            <person name="Hirai A."/>
            <person name="Shinozaki K."/>
            <person name="Sugiura M."/>
        </authorList>
    </citation>
    <scope>NUCLEOTIDE SEQUENCE [LARGE SCALE GENOMIC DNA]</scope>
    <source>
        <strain>cv. Nipponbare</strain>
    </source>
</reference>
<reference key="2">
    <citation type="journal article" date="2004" name="Plant Physiol.">
        <title>A comparison of rice chloroplast genomes.</title>
        <authorList>
            <person name="Tang J."/>
            <person name="Xia H."/>
            <person name="Cao M."/>
            <person name="Zhang X."/>
            <person name="Zeng W."/>
            <person name="Hu S."/>
            <person name="Tong W."/>
            <person name="Wang J."/>
            <person name="Wang J."/>
            <person name="Yu J."/>
            <person name="Yang H."/>
            <person name="Zhu L."/>
        </authorList>
    </citation>
    <scope>NUCLEOTIDE SEQUENCE [LARGE SCALE GENOMIC DNA]</scope>
    <source>
        <strain>cv. Nipponbare</strain>
    </source>
</reference>
<dbReference type="EMBL" id="X15901">
    <property type="protein sequence ID" value="CAA33958.1"/>
    <property type="molecule type" value="Genomic_DNA"/>
</dbReference>
<dbReference type="EMBL" id="AY522330">
    <property type="protein sequence ID" value="AAS46129.1"/>
    <property type="status" value="ALT_INIT"/>
    <property type="molecule type" value="Genomic_DNA"/>
</dbReference>
<dbReference type="PIR" id="S05116">
    <property type="entry name" value="S05116"/>
</dbReference>
<dbReference type="RefSeq" id="NP_039396.1">
    <property type="nucleotide sequence ID" value="NC_001320.1"/>
</dbReference>
<dbReference type="FunCoup" id="P0C515">
    <property type="interactions" value="157"/>
</dbReference>
<dbReference type="STRING" id="39947.P0C515"/>
<dbReference type="PaxDb" id="39947-P0C515"/>
<dbReference type="GeneID" id="3131468"/>
<dbReference type="KEGG" id="dosa:CAA33958.1"/>
<dbReference type="KEGG" id="osa:3131468"/>
<dbReference type="InParanoid" id="P0C515"/>
<dbReference type="OrthoDB" id="588925at2759"/>
<dbReference type="Proteomes" id="UP000059680">
    <property type="component" value="Chloroplast"/>
</dbReference>
<dbReference type="GO" id="GO:0009535">
    <property type="term" value="C:chloroplast thylakoid membrane"/>
    <property type="evidence" value="ECO:0007669"/>
    <property type="project" value="UniProtKB-SubCell"/>
</dbReference>
<dbReference type="GO" id="GO:0009522">
    <property type="term" value="C:photosystem I"/>
    <property type="evidence" value="ECO:0007669"/>
    <property type="project" value="InterPro"/>
</dbReference>
<dbReference type="GO" id="GO:0009536">
    <property type="term" value="C:plastid"/>
    <property type="evidence" value="ECO:0000305"/>
    <property type="project" value="Gramene"/>
</dbReference>
<dbReference type="GO" id="GO:0015979">
    <property type="term" value="P:photosynthesis"/>
    <property type="evidence" value="ECO:0007669"/>
    <property type="project" value="UniProtKB-UniRule"/>
</dbReference>
<dbReference type="HAMAP" id="MF_00437">
    <property type="entry name" value="Ycf4"/>
    <property type="match status" value="1"/>
</dbReference>
<dbReference type="InterPro" id="IPR003359">
    <property type="entry name" value="PSI_Ycf4_assembly"/>
</dbReference>
<dbReference type="PANTHER" id="PTHR33288">
    <property type="match status" value="1"/>
</dbReference>
<dbReference type="PANTHER" id="PTHR33288:SF4">
    <property type="entry name" value="PHOTOSYSTEM I ASSEMBLY PROTEIN YCF4"/>
    <property type="match status" value="1"/>
</dbReference>
<dbReference type="Pfam" id="PF02392">
    <property type="entry name" value="Ycf4"/>
    <property type="match status" value="1"/>
</dbReference>
<comment type="function">
    <text evidence="1">Seems to be required for the assembly of the photosystem I complex.</text>
</comment>
<comment type="subcellular location">
    <subcellularLocation>
        <location evidence="1">Plastid</location>
        <location evidence="1">Chloroplast thylakoid membrane</location>
        <topology evidence="1">Multi-pass membrane protein</topology>
    </subcellularLocation>
</comment>
<comment type="similarity">
    <text evidence="1">Belongs to the Ycf4 family.</text>
</comment>
<comment type="sequence caution" evidence="2">
    <conflict type="erroneous initiation">
        <sequence resource="EMBL-CDS" id="AAS46129"/>
    </conflict>
</comment>
<gene>
    <name evidence="1" type="primary">ycf4</name>
    <name type="ordered locus">LOC_Osp1g00460</name>
    <name type="ORF">Nip069</name>
</gene>
<geneLocation type="chloroplast"/>
<sequence>MNWRSEHIWIELLKGSRKRGNFFWACILFLGSLGFLAVGASSYLGKNIISVLPSQQILFFPQGVVMSFYGIAGLFISAYLWCTILWNVGSGYDRFDRKEGVVCIFRWGFPGIKRRVFLRFLMRDIQSIRIQVKEGLFPRRILYMEIRGQGAIPLTRTDEKFFTPREIEQKAAELAYFLRIPMEVF</sequence>
<accession>P0C515</accession>
<accession>P12206</accession>
<accession>Q6QXT9</accession>
<accession>Q6QY66</accession>
<name>YCF4_ORYSJ</name>
<protein>
    <recommendedName>
        <fullName evidence="1">Photosystem I assembly protein Ycf4</fullName>
    </recommendedName>
</protein>
<evidence type="ECO:0000255" key="1">
    <source>
        <dbReference type="HAMAP-Rule" id="MF_00437"/>
    </source>
</evidence>
<evidence type="ECO:0000305" key="2"/>
<keyword id="KW-0150">Chloroplast</keyword>
<keyword id="KW-0472">Membrane</keyword>
<keyword id="KW-0602">Photosynthesis</keyword>
<keyword id="KW-0934">Plastid</keyword>
<keyword id="KW-1185">Reference proteome</keyword>
<keyword id="KW-0793">Thylakoid</keyword>
<keyword id="KW-0812">Transmembrane</keyword>
<keyword id="KW-1133">Transmembrane helix</keyword>
<feature type="chain" id="PRO_0000290106" description="Photosystem I assembly protein Ycf4">
    <location>
        <begin position="1"/>
        <end position="185"/>
    </location>
</feature>
<feature type="transmembrane region" description="Helical" evidence="1">
    <location>
        <begin position="21"/>
        <end position="43"/>
    </location>
</feature>
<feature type="transmembrane region" description="Helical" evidence="1">
    <location>
        <begin position="63"/>
        <end position="85"/>
    </location>
</feature>
<organism>
    <name type="scientific">Oryza sativa subsp. japonica</name>
    <name type="common">Rice</name>
    <dbReference type="NCBI Taxonomy" id="39947"/>
    <lineage>
        <taxon>Eukaryota</taxon>
        <taxon>Viridiplantae</taxon>
        <taxon>Streptophyta</taxon>
        <taxon>Embryophyta</taxon>
        <taxon>Tracheophyta</taxon>
        <taxon>Spermatophyta</taxon>
        <taxon>Magnoliopsida</taxon>
        <taxon>Liliopsida</taxon>
        <taxon>Poales</taxon>
        <taxon>Poaceae</taxon>
        <taxon>BOP clade</taxon>
        <taxon>Oryzoideae</taxon>
        <taxon>Oryzeae</taxon>
        <taxon>Oryzinae</taxon>
        <taxon>Oryza</taxon>
        <taxon>Oryza sativa</taxon>
    </lineage>
</organism>